<reference key="1">
    <citation type="journal article" date="1999" name="Nat. Genet.">
        <title>Identification of the gene (SEDL) causing X-linked spondyloepiphyseal dysplasia tarda.</title>
        <authorList>
            <person name="Gedeon A.K."/>
            <person name="Colley A."/>
            <person name="Jamieson R."/>
            <person name="Thompson E.M."/>
            <person name="Rogers J."/>
            <person name="Sillence D."/>
            <person name="Tiller G.E."/>
            <person name="Mulley J.C."/>
            <person name="Gecz J."/>
        </authorList>
    </citation>
    <scope>NUCLEOTIDE SEQUENCE [GENOMIC DNA]</scope>
    <scope>TISSUE SPECIFICITY</scope>
    <scope>INVOLVEMENT IN SEDT</scope>
</reference>
<reference key="2">
    <citation type="journal article" date="2004" name="Nat. Genet.">
        <title>Complete sequencing and characterization of 21,243 full-length human cDNAs.</title>
        <authorList>
            <person name="Ota T."/>
            <person name="Suzuki Y."/>
            <person name="Nishikawa T."/>
            <person name="Otsuki T."/>
            <person name="Sugiyama T."/>
            <person name="Irie R."/>
            <person name="Wakamatsu A."/>
            <person name="Hayashi K."/>
            <person name="Sato H."/>
            <person name="Nagai K."/>
            <person name="Kimura K."/>
            <person name="Makita H."/>
            <person name="Sekine M."/>
            <person name="Obayashi M."/>
            <person name="Nishi T."/>
            <person name="Shibahara T."/>
            <person name="Tanaka T."/>
            <person name="Ishii S."/>
            <person name="Yamamoto J."/>
            <person name="Saito K."/>
            <person name="Kawai Y."/>
            <person name="Isono Y."/>
            <person name="Nakamura Y."/>
            <person name="Nagahari K."/>
            <person name="Murakami K."/>
            <person name="Yasuda T."/>
            <person name="Iwayanagi T."/>
            <person name="Wagatsuma M."/>
            <person name="Shiratori A."/>
            <person name="Sudo H."/>
            <person name="Hosoiri T."/>
            <person name="Kaku Y."/>
            <person name="Kodaira H."/>
            <person name="Kondo H."/>
            <person name="Sugawara M."/>
            <person name="Takahashi M."/>
            <person name="Kanda K."/>
            <person name="Yokoi T."/>
            <person name="Furuya T."/>
            <person name="Kikkawa E."/>
            <person name="Omura Y."/>
            <person name="Abe K."/>
            <person name="Kamihara K."/>
            <person name="Katsuta N."/>
            <person name="Sato K."/>
            <person name="Tanikawa M."/>
            <person name="Yamazaki M."/>
            <person name="Ninomiya K."/>
            <person name="Ishibashi T."/>
            <person name="Yamashita H."/>
            <person name="Murakawa K."/>
            <person name="Fujimori K."/>
            <person name="Tanai H."/>
            <person name="Kimata M."/>
            <person name="Watanabe M."/>
            <person name="Hiraoka S."/>
            <person name="Chiba Y."/>
            <person name="Ishida S."/>
            <person name="Ono Y."/>
            <person name="Takiguchi S."/>
            <person name="Watanabe S."/>
            <person name="Yosida M."/>
            <person name="Hotuta T."/>
            <person name="Kusano J."/>
            <person name="Kanehori K."/>
            <person name="Takahashi-Fujii A."/>
            <person name="Hara H."/>
            <person name="Tanase T.-O."/>
            <person name="Nomura Y."/>
            <person name="Togiya S."/>
            <person name="Komai F."/>
            <person name="Hara R."/>
            <person name="Takeuchi K."/>
            <person name="Arita M."/>
            <person name="Imose N."/>
            <person name="Musashino K."/>
            <person name="Yuuki H."/>
            <person name="Oshima A."/>
            <person name="Sasaki N."/>
            <person name="Aotsuka S."/>
            <person name="Yoshikawa Y."/>
            <person name="Matsunawa H."/>
            <person name="Ichihara T."/>
            <person name="Shiohata N."/>
            <person name="Sano S."/>
            <person name="Moriya S."/>
            <person name="Momiyama H."/>
            <person name="Satoh N."/>
            <person name="Takami S."/>
            <person name="Terashima Y."/>
            <person name="Suzuki O."/>
            <person name="Nakagawa S."/>
            <person name="Senoh A."/>
            <person name="Mizoguchi H."/>
            <person name="Goto Y."/>
            <person name="Shimizu F."/>
            <person name="Wakebe H."/>
            <person name="Hishigaki H."/>
            <person name="Watanabe T."/>
            <person name="Sugiyama A."/>
            <person name="Takemoto M."/>
            <person name="Kawakami B."/>
            <person name="Yamazaki M."/>
            <person name="Watanabe K."/>
            <person name="Kumagai A."/>
            <person name="Itakura S."/>
            <person name="Fukuzumi Y."/>
            <person name="Fujimori Y."/>
            <person name="Komiyama M."/>
            <person name="Tashiro H."/>
            <person name="Tanigami A."/>
            <person name="Fujiwara T."/>
            <person name="Ono T."/>
            <person name="Yamada K."/>
            <person name="Fujii Y."/>
            <person name="Ozaki K."/>
            <person name="Hirao M."/>
            <person name="Ohmori Y."/>
            <person name="Kawabata A."/>
            <person name="Hikiji T."/>
            <person name="Kobatake N."/>
            <person name="Inagaki H."/>
            <person name="Ikema Y."/>
            <person name="Okamoto S."/>
            <person name="Okitani R."/>
            <person name="Kawakami T."/>
            <person name="Noguchi S."/>
            <person name="Itoh T."/>
            <person name="Shigeta K."/>
            <person name="Senba T."/>
            <person name="Matsumura K."/>
            <person name="Nakajima Y."/>
            <person name="Mizuno T."/>
            <person name="Morinaga M."/>
            <person name="Sasaki M."/>
            <person name="Togashi T."/>
            <person name="Oyama M."/>
            <person name="Hata H."/>
            <person name="Watanabe M."/>
            <person name="Komatsu T."/>
            <person name="Mizushima-Sugano J."/>
            <person name="Satoh T."/>
            <person name="Shirai Y."/>
            <person name="Takahashi Y."/>
            <person name="Nakagawa K."/>
            <person name="Okumura K."/>
            <person name="Nagase T."/>
            <person name="Nomura N."/>
            <person name="Kikuchi H."/>
            <person name="Masuho Y."/>
            <person name="Yamashita R."/>
            <person name="Nakai K."/>
            <person name="Yada T."/>
            <person name="Nakamura Y."/>
            <person name="Ohara O."/>
            <person name="Isogai T."/>
            <person name="Sugano S."/>
        </authorList>
    </citation>
    <scope>NUCLEOTIDE SEQUENCE [LARGE SCALE MRNA] (ISOFORM 2)</scope>
    <scope>NUCLEOTIDE SEQUENCE [LARGE SCALE MRNA] OF 1-130 (ISOFORM 3)</scope>
</reference>
<reference key="3">
    <citation type="journal article" date="2005" name="Nature">
        <title>The DNA sequence of the human X chromosome.</title>
        <authorList>
            <person name="Ross M.T."/>
            <person name="Grafham D.V."/>
            <person name="Coffey A.J."/>
            <person name="Scherer S."/>
            <person name="McLay K."/>
            <person name="Muzny D."/>
            <person name="Platzer M."/>
            <person name="Howell G.R."/>
            <person name="Burrows C."/>
            <person name="Bird C.P."/>
            <person name="Frankish A."/>
            <person name="Lovell F.L."/>
            <person name="Howe K.L."/>
            <person name="Ashurst J.L."/>
            <person name="Fulton R.S."/>
            <person name="Sudbrak R."/>
            <person name="Wen G."/>
            <person name="Jones M.C."/>
            <person name="Hurles M.E."/>
            <person name="Andrews T.D."/>
            <person name="Scott C.E."/>
            <person name="Searle S."/>
            <person name="Ramser J."/>
            <person name="Whittaker A."/>
            <person name="Deadman R."/>
            <person name="Carter N.P."/>
            <person name="Hunt S.E."/>
            <person name="Chen R."/>
            <person name="Cree A."/>
            <person name="Gunaratne P."/>
            <person name="Havlak P."/>
            <person name="Hodgson A."/>
            <person name="Metzker M.L."/>
            <person name="Richards S."/>
            <person name="Scott G."/>
            <person name="Steffen D."/>
            <person name="Sodergren E."/>
            <person name="Wheeler D.A."/>
            <person name="Worley K.C."/>
            <person name="Ainscough R."/>
            <person name="Ambrose K.D."/>
            <person name="Ansari-Lari M.A."/>
            <person name="Aradhya S."/>
            <person name="Ashwell R.I."/>
            <person name="Babbage A.K."/>
            <person name="Bagguley C.L."/>
            <person name="Ballabio A."/>
            <person name="Banerjee R."/>
            <person name="Barker G.E."/>
            <person name="Barlow K.F."/>
            <person name="Barrett I.P."/>
            <person name="Bates K.N."/>
            <person name="Beare D.M."/>
            <person name="Beasley H."/>
            <person name="Beasley O."/>
            <person name="Beck A."/>
            <person name="Bethel G."/>
            <person name="Blechschmidt K."/>
            <person name="Brady N."/>
            <person name="Bray-Allen S."/>
            <person name="Bridgeman A.M."/>
            <person name="Brown A.J."/>
            <person name="Brown M.J."/>
            <person name="Bonnin D."/>
            <person name="Bruford E.A."/>
            <person name="Buhay C."/>
            <person name="Burch P."/>
            <person name="Burford D."/>
            <person name="Burgess J."/>
            <person name="Burrill W."/>
            <person name="Burton J."/>
            <person name="Bye J.M."/>
            <person name="Carder C."/>
            <person name="Carrel L."/>
            <person name="Chako J."/>
            <person name="Chapman J.C."/>
            <person name="Chavez D."/>
            <person name="Chen E."/>
            <person name="Chen G."/>
            <person name="Chen Y."/>
            <person name="Chen Z."/>
            <person name="Chinault C."/>
            <person name="Ciccodicola A."/>
            <person name="Clark S.Y."/>
            <person name="Clarke G."/>
            <person name="Clee C.M."/>
            <person name="Clegg S."/>
            <person name="Clerc-Blankenburg K."/>
            <person name="Clifford K."/>
            <person name="Cobley V."/>
            <person name="Cole C.G."/>
            <person name="Conquer J.S."/>
            <person name="Corby N."/>
            <person name="Connor R.E."/>
            <person name="David R."/>
            <person name="Davies J."/>
            <person name="Davis C."/>
            <person name="Davis J."/>
            <person name="Delgado O."/>
            <person name="Deshazo D."/>
            <person name="Dhami P."/>
            <person name="Ding Y."/>
            <person name="Dinh H."/>
            <person name="Dodsworth S."/>
            <person name="Draper H."/>
            <person name="Dugan-Rocha S."/>
            <person name="Dunham A."/>
            <person name="Dunn M."/>
            <person name="Durbin K.J."/>
            <person name="Dutta I."/>
            <person name="Eades T."/>
            <person name="Ellwood M."/>
            <person name="Emery-Cohen A."/>
            <person name="Errington H."/>
            <person name="Evans K.L."/>
            <person name="Faulkner L."/>
            <person name="Francis F."/>
            <person name="Frankland J."/>
            <person name="Fraser A.E."/>
            <person name="Galgoczy P."/>
            <person name="Gilbert J."/>
            <person name="Gill R."/>
            <person name="Gloeckner G."/>
            <person name="Gregory S.G."/>
            <person name="Gribble S."/>
            <person name="Griffiths C."/>
            <person name="Grocock R."/>
            <person name="Gu Y."/>
            <person name="Gwilliam R."/>
            <person name="Hamilton C."/>
            <person name="Hart E.A."/>
            <person name="Hawes A."/>
            <person name="Heath P.D."/>
            <person name="Heitmann K."/>
            <person name="Hennig S."/>
            <person name="Hernandez J."/>
            <person name="Hinzmann B."/>
            <person name="Ho S."/>
            <person name="Hoffs M."/>
            <person name="Howden P.J."/>
            <person name="Huckle E.J."/>
            <person name="Hume J."/>
            <person name="Hunt P.J."/>
            <person name="Hunt A.R."/>
            <person name="Isherwood J."/>
            <person name="Jacob L."/>
            <person name="Johnson D."/>
            <person name="Jones S."/>
            <person name="de Jong P.J."/>
            <person name="Joseph S.S."/>
            <person name="Keenan S."/>
            <person name="Kelly S."/>
            <person name="Kershaw J.K."/>
            <person name="Khan Z."/>
            <person name="Kioschis P."/>
            <person name="Klages S."/>
            <person name="Knights A.J."/>
            <person name="Kosiura A."/>
            <person name="Kovar-Smith C."/>
            <person name="Laird G.K."/>
            <person name="Langford C."/>
            <person name="Lawlor S."/>
            <person name="Leversha M."/>
            <person name="Lewis L."/>
            <person name="Liu W."/>
            <person name="Lloyd C."/>
            <person name="Lloyd D.M."/>
            <person name="Loulseged H."/>
            <person name="Loveland J.E."/>
            <person name="Lovell J.D."/>
            <person name="Lozado R."/>
            <person name="Lu J."/>
            <person name="Lyne R."/>
            <person name="Ma J."/>
            <person name="Maheshwari M."/>
            <person name="Matthews L.H."/>
            <person name="McDowall J."/>
            <person name="McLaren S."/>
            <person name="McMurray A."/>
            <person name="Meidl P."/>
            <person name="Meitinger T."/>
            <person name="Milne S."/>
            <person name="Miner G."/>
            <person name="Mistry S.L."/>
            <person name="Morgan M."/>
            <person name="Morris S."/>
            <person name="Mueller I."/>
            <person name="Mullikin J.C."/>
            <person name="Nguyen N."/>
            <person name="Nordsiek G."/>
            <person name="Nyakatura G."/>
            <person name="O'dell C.N."/>
            <person name="Okwuonu G."/>
            <person name="Palmer S."/>
            <person name="Pandian R."/>
            <person name="Parker D."/>
            <person name="Parrish J."/>
            <person name="Pasternak S."/>
            <person name="Patel D."/>
            <person name="Pearce A.V."/>
            <person name="Pearson D.M."/>
            <person name="Pelan S.E."/>
            <person name="Perez L."/>
            <person name="Porter K.M."/>
            <person name="Ramsey Y."/>
            <person name="Reichwald K."/>
            <person name="Rhodes S."/>
            <person name="Ridler K.A."/>
            <person name="Schlessinger D."/>
            <person name="Schueler M.G."/>
            <person name="Sehra H.K."/>
            <person name="Shaw-Smith C."/>
            <person name="Shen H."/>
            <person name="Sheridan E.M."/>
            <person name="Shownkeen R."/>
            <person name="Skuce C.D."/>
            <person name="Smith M.L."/>
            <person name="Sotheran E.C."/>
            <person name="Steingruber H.E."/>
            <person name="Steward C.A."/>
            <person name="Storey R."/>
            <person name="Swann R.M."/>
            <person name="Swarbreck D."/>
            <person name="Tabor P.E."/>
            <person name="Taudien S."/>
            <person name="Taylor T."/>
            <person name="Teague B."/>
            <person name="Thomas K."/>
            <person name="Thorpe A."/>
            <person name="Timms K."/>
            <person name="Tracey A."/>
            <person name="Trevanion S."/>
            <person name="Tromans A.C."/>
            <person name="d'Urso M."/>
            <person name="Verduzco D."/>
            <person name="Villasana D."/>
            <person name="Waldron L."/>
            <person name="Wall M."/>
            <person name="Wang Q."/>
            <person name="Warren J."/>
            <person name="Warry G.L."/>
            <person name="Wei X."/>
            <person name="West A."/>
            <person name="Whitehead S.L."/>
            <person name="Whiteley M.N."/>
            <person name="Wilkinson J.E."/>
            <person name="Willey D.L."/>
            <person name="Williams G."/>
            <person name="Williams L."/>
            <person name="Williamson A."/>
            <person name="Williamson H."/>
            <person name="Wilming L."/>
            <person name="Woodmansey R.L."/>
            <person name="Wray P.W."/>
            <person name="Yen J."/>
            <person name="Zhang J."/>
            <person name="Zhou J."/>
            <person name="Zoghbi H."/>
            <person name="Zorilla S."/>
            <person name="Buck D."/>
            <person name="Reinhardt R."/>
            <person name="Poustka A."/>
            <person name="Rosenthal A."/>
            <person name="Lehrach H."/>
            <person name="Meindl A."/>
            <person name="Minx P.J."/>
            <person name="Hillier L.W."/>
            <person name="Willard H.F."/>
            <person name="Wilson R.K."/>
            <person name="Waterston R.H."/>
            <person name="Rice C.M."/>
            <person name="Vaudin M."/>
            <person name="Coulson A."/>
            <person name="Nelson D.L."/>
            <person name="Weinstock G."/>
            <person name="Sulston J.E."/>
            <person name="Durbin R.M."/>
            <person name="Hubbard T."/>
            <person name="Gibbs R.A."/>
            <person name="Beck S."/>
            <person name="Rogers J."/>
            <person name="Bentley D.R."/>
        </authorList>
    </citation>
    <scope>NUCLEOTIDE SEQUENCE [LARGE SCALE GENOMIC DNA]</scope>
</reference>
<reference key="4">
    <citation type="journal article" date="2004" name="Genome Res.">
        <title>The status, quality, and expansion of the NIH full-length cDNA project: the Mammalian Gene Collection (MGC).</title>
        <authorList>
            <consortium name="The MGC Project Team"/>
        </authorList>
    </citation>
    <scope>NUCLEOTIDE SEQUENCE [LARGE SCALE MRNA] (ISOFORM 1)</scope>
    <source>
        <tissue>Ovary</tissue>
        <tissue>Prostate</tissue>
    </source>
</reference>
<reference key="5">
    <citation type="journal article" date="2000" name="Genomics">
        <title>Gene structure and expression study of the SEDL gene for spondyloepiphyseal dysplasia tarda.</title>
        <authorList>
            <person name="Gecz J."/>
            <person name="Hillman M.A."/>
            <person name="Gedeon A.K."/>
            <person name="Cox T.C."/>
            <person name="Baker E."/>
            <person name="Mulley J.C."/>
        </authorList>
    </citation>
    <scope>GENOMIC ORGANIZATION</scope>
    <scope>ALTERNATIVE SPLICING</scope>
    <scope>SUBCELLULAR LOCATION</scope>
</reference>
<reference key="6">
    <citation type="journal article" date="2002" name="Nature">
        <title>Functional organization of the yeast proteome by systematic analysis of protein complexes.</title>
        <authorList>
            <person name="Gavin A.-C."/>
            <person name="Boesche M."/>
            <person name="Krause R."/>
            <person name="Grandi P."/>
            <person name="Marzioch M."/>
            <person name="Bauer A."/>
            <person name="Schultz J."/>
            <person name="Rick J.M."/>
            <person name="Michon A.-M."/>
            <person name="Cruciat C.-M."/>
            <person name="Remor M."/>
            <person name="Hoefert C."/>
            <person name="Schelder M."/>
            <person name="Brajenovic M."/>
            <person name="Ruffner H."/>
            <person name="Merino A."/>
            <person name="Klein K."/>
            <person name="Hudak M."/>
            <person name="Dickson D."/>
            <person name="Rudi T."/>
            <person name="Gnau V."/>
            <person name="Bauch A."/>
            <person name="Bastuck S."/>
            <person name="Huhse B."/>
            <person name="Leutwein C."/>
            <person name="Heurtier M.-A."/>
            <person name="Copley R.R."/>
            <person name="Edelmann A."/>
            <person name="Querfurth E."/>
            <person name="Rybin V."/>
            <person name="Drewes G."/>
            <person name="Raida M."/>
            <person name="Bouwmeester T."/>
            <person name="Bork P."/>
            <person name="Seraphin B."/>
            <person name="Kuster B."/>
            <person name="Neubauer G."/>
            <person name="Superti-Furga G."/>
        </authorList>
    </citation>
    <scope>IDENTIFICATION IN TRAPP COMPLEX</scope>
</reference>
<reference key="7">
    <citation type="journal article" date="2011" name="BMC Syst. Biol.">
        <title>Initial characterization of the human central proteome.</title>
        <authorList>
            <person name="Burkard T.R."/>
            <person name="Planyavsky M."/>
            <person name="Kaupe I."/>
            <person name="Breitwieser F.P."/>
            <person name="Buerckstuemmer T."/>
            <person name="Bennett K.L."/>
            <person name="Superti-Furga G."/>
            <person name="Colinge J."/>
        </authorList>
    </citation>
    <scope>IDENTIFICATION BY MASS SPECTROMETRY [LARGE SCALE ANALYSIS]</scope>
</reference>
<reference key="8">
    <citation type="journal article" date="2011" name="Mol. Biol. Cell">
        <title>C4orf41 and TTC-15 are mammalian TRAPP components with a role at an early stage in ER-to-Golgi trafficking.</title>
        <authorList>
            <person name="Scrivens P.J."/>
            <person name="Noueihed B."/>
            <person name="Shahrzad N."/>
            <person name="Hul S."/>
            <person name="Brunet S."/>
            <person name="Sacher M."/>
        </authorList>
    </citation>
    <scope>IDENTIFICATION IN TRAPP COMPLEX</scope>
</reference>
<reference key="9">
    <citation type="journal article" date="2013" name="J. Proteome Res.">
        <title>Toward a comprehensive characterization of a human cancer cell phosphoproteome.</title>
        <authorList>
            <person name="Zhou H."/>
            <person name="Di Palma S."/>
            <person name="Preisinger C."/>
            <person name="Peng M."/>
            <person name="Polat A.N."/>
            <person name="Heck A.J."/>
            <person name="Mohammed S."/>
        </authorList>
    </citation>
    <scope>PHOSPHORYLATION [LARGE SCALE ANALYSIS] AT SER-119</scope>
    <scope>IDENTIFICATION BY MASS SPECTROMETRY [LARGE SCALE ANALYSIS]</scope>
    <source>
        <tissue>Cervix carcinoma</tissue>
        <tissue>Erythroleukemia</tissue>
    </source>
</reference>
<reference key="10">
    <citation type="journal article" date="2015" name="J. Cell Biol.">
        <title>TRAMM/TrappC12 plays a role in chromosome congression, kinetochore stability, and CENP-E recruitment.</title>
        <authorList>
            <person name="Milev M.P."/>
            <person name="Hasaj B."/>
            <person name="Saint-Dic D."/>
            <person name="Snounou S."/>
            <person name="Zhao Q."/>
            <person name="Sacher M."/>
        </authorList>
    </citation>
    <scope>SUBCELLULAR LOCATION</scope>
</reference>
<reference key="11">
    <citation type="journal article" date="2003" name="Gene">
        <title>Human wild-type SEDL protein functionally complements yeast Trs20p but some naturally occurring SEDL mutants do not.</title>
        <authorList>
            <person name="Gecz J."/>
            <person name="Shaw M.A."/>
            <person name="Bellon J.R."/>
            <person name="de Barros Lopes M."/>
        </authorList>
    </citation>
    <scope>CHARACTERIZATION OF VARIANT SEDL TYR-47</scope>
</reference>
<reference key="12">
    <citation type="journal article" date="2009" name="Traffic">
        <title>TRAPPC2L is a novel, highly conserved TRAPP-interacting protein.</title>
        <authorList>
            <person name="Scrivens P.J."/>
            <person name="Shahrzad N."/>
            <person name="Moores A."/>
            <person name="Morin A."/>
            <person name="Brunet S."/>
            <person name="Sacher M."/>
        </authorList>
    </citation>
    <scope>IDENTIFICATION IN TRAPP COMPLEX</scope>
    <scope>INTERACTION WITH TRAPPC2L</scope>
</reference>
<reference key="13">
    <citation type="journal article" date="2010" name="PLoS ONE">
        <title>SEDLIN forms homodimers: characterisation of SEDLIN mutations and their interactions with transcription factors MBP1, PITX1 and SF1.</title>
        <authorList>
            <person name="Jeyabalan J."/>
            <person name="Nesbit M.A."/>
            <person name="Galvanovskis J."/>
            <person name="Callaghan R."/>
            <person name="Rorsman P."/>
            <person name="Thakker R.V."/>
        </authorList>
    </citation>
    <scope>SELF-ASSOCIATION</scope>
    <scope>INTERACTION WITH ENO1; PITX1 AND SF1</scope>
    <scope>SUBCELLULAR LOCATION</scope>
    <scope>CHARACTERIZATION OF VARIANTS SEDL TYR-47; LEU-73; SER-83 AND ASP-130</scope>
</reference>
<reference key="14">
    <citation type="journal article" date="2001" name="Am. J. Hum. Genet.">
        <title>The molecular basis of X-linked spondyloepiphyseal dysplasia tarda.</title>
        <authorList>
            <person name="Gedeon A.K."/>
            <person name="Tiller G.E."/>
            <person name="Le Merrer M."/>
            <person name="Heuertz S."/>
            <person name="Tranebjaerg L."/>
            <person name="Chitayat D."/>
            <person name="Robertson S."/>
            <person name="Glass I.A."/>
            <person name="Savarirayan R."/>
            <person name="Cole W.G."/>
            <person name="Rimoin D.L."/>
            <person name="Kousseff B.G."/>
            <person name="Ohashi H."/>
            <person name="Zabel B."/>
            <person name="Munnich A."/>
            <person name="Gecz J."/>
            <person name="Mulley J.C."/>
        </authorList>
    </citation>
    <scope>VARIANTS SEDT TYR-47; LEU-73 AND ASP-130</scope>
</reference>
<reference key="15">
    <citation type="journal article" date="2001" name="J. Med. Genet.">
        <title>A missense mutation in the SEDL gene results in delayed onset of X linked spondyloepiphyseal dysplasia in a large pedigree.</title>
        <authorList>
            <person name="Grunebaum E."/>
            <person name="Arpaia E."/>
            <person name="MacKenzie J.J."/>
            <person name="Fitzpatrick J."/>
            <person name="Ray P.N."/>
            <person name="Roifman C.M."/>
        </authorList>
    </citation>
    <scope>VARIANT SEDT SER-83</scope>
</reference>
<gene>
    <name type="primary">TRAPPC2</name>
    <name type="synonym">SEDL</name>
</gene>
<organism>
    <name type="scientific">Homo sapiens</name>
    <name type="common">Human</name>
    <dbReference type="NCBI Taxonomy" id="9606"/>
    <lineage>
        <taxon>Eukaryota</taxon>
        <taxon>Metazoa</taxon>
        <taxon>Chordata</taxon>
        <taxon>Craniata</taxon>
        <taxon>Vertebrata</taxon>
        <taxon>Euteleostomi</taxon>
        <taxon>Mammalia</taxon>
        <taxon>Eutheria</taxon>
        <taxon>Euarchontoglires</taxon>
        <taxon>Primates</taxon>
        <taxon>Haplorrhini</taxon>
        <taxon>Catarrhini</taxon>
        <taxon>Hominidae</taxon>
        <taxon>Homo</taxon>
    </lineage>
</organism>
<proteinExistence type="evidence at protein level"/>
<feature type="chain" id="PRO_0000211566" description="Trafficking protein particle complex subunit 2">
    <location>
        <begin position="1"/>
        <end position="140"/>
    </location>
</feature>
<feature type="modified residue" description="Phosphoserine" evidence="14">
    <location>
        <position position="119"/>
    </location>
</feature>
<feature type="splice variant" id="VSP_041681" description="In isoform 2 and isoform 3." evidence="12">
    <original>M</original>
    <variation>MSSWKQDRSGLRSTELNVLEYQPLCAVRSHILKTM</variation>
    <location>
        <position position="1"/>
    </location>
</feature>
<feature type="splice variant" id="VSP_006040" description="In isoform 2." evidence="12">
    <original>H</original>
    <variation>HILTFLVKVTN</variation>
    <location>
        <position position="80"/>
    </location>
</feature>
<feature type="splice variant" id="VSP_041682" description="In isoform 2." evidence="12">
    <location>
        <begin position="81"/>
        <end position="140"/>
    </location>
</feature>
<feature type="sequence variant" id="VAR_012358" description="In SEDT; loss-of-function mutation." evidence="4 7 9">
    <original>D</original>
    <variation>Y</variation>
    <location>
        <position position="47"/>
    </location>
</feature>
<feature type="sequence variant" id="VAR_012359" description="In SEDT; loss of interaction with ENO1, PITX1 and SF1; dbSNP:rs769218264." evidence="4 9">
    <original>S</original>
    <variation>L</variation>
    <location>
        <position position="73"/>
    </location>
</feature>
<feature type="sequence variant" id="VAR_012361" description="In SEDT; mild form; loss of interaction with ENO1, PITX1 and SF1; dbSNP:rs104894948." evidence="5 9">
    <original>F</original>
    <variation>S</variation>
    <location>
        <position position="83"/>
    </location>
</feature>
<feature type="sequence variant" id="VAR_012360" description="In SEDT; loss of interaction with ENO1, PITX1 and SF1." evidence="4 9">
    <original>V</original>
    <variation>D</variation>
    <location>
        <position position="130"/>
    </location>
</feature>
<name>TPC2A_HUMAN</name>
<accession>P0DI81</accession>
<accession>A6NEG0</accession>
<accession>O14582</accession>
<accession>Q9HD16</accession>
<comment type="function">
    <text evidence="1">Prevents transcriptional repression and induction of cell death by ENO1 (By similarity). May play a role in vesicular transport from endoplasmic reticulum to Golgi.</text>
</comment>
<comment type="subunit">
    <text evidence="6 8 9 10">Can homodimerize. Component of the multisubunit TRAPP (transport protein particle) complex, which includes TRAPPC2, TRAPPC2L, TRAPPC3, TRAPPC3L, TRAPPC4, TRAPPC5, TRAPPC8, TRAPPC9, TRAPPC10, TRAPPC11 and TRAPPC12. Interacts with ENO1, PITX1 and SF1.</text>
</comment>
<comment type="interaction">
    <interactant intactId="EBI-5663373">
        <id>P0DI81</id>
    </interactant>
    <interactant intactId="EBI-2556746">
        <id>Q9UBC2</id>
        <label>EPS15L1</label>
    </interactant>
    <organismsDiffer>false</organismsDiffer>
    <experiments>3</experiments>
</comment>
<comment type="interaction">
    <interactant intactId="EBI-5663373">
        <id>P0DI81</id>
    </interactant>
    <interactant intactId="EBI-9027502">
        <id>Q719H9</id>
        <label>KCTD1</label>
    </interactant>
    <organismsDiffer>false</organismsDiffer>
    <experiments>3</experiments>
</comment>
<comment type="interaction">
    <interactant intactId="EBI-5663373">
        <id>P0DI81</id>
    </interactant>
    <interactant intactId="EBI-5235829">
        <id>Q8IWZ5</id>
        <label>TRIM42</label>
    </interactant>
    <organismsDiffer>false</organismsDiffer>
    <experiments>3</experiments>
</comment>
<comment type="interaction">
    <interactant intactId="EBI-11961968">
        <id>P0DI81-3</id>
    </interactant>
    <interactant intactId="EBI-11958621">
        <id>Q9UBC2-3</id>
        <label>EPS15L1</label>
    </interactant>
    <organismsDiffer>false</organismsDiffer>
    <experiments>3</experiments>
</comment>
<comment type="interaction">
    <interactant intactId="EBI-11961968">
        <id>P0DI81-3</id>
    </interactant>
    <interactant intactId="EBI-6509505">
        <id>Q0VD86</id>
        <label>INCA1</label>
    </interactant>
    <organismsDiffer>false</organismsDiffer>
    <experiments>3</experiments>
</comment>
<comment type="interaction">
    <interactant intactId="EBI-11961968">
        <id>P0DI81-3</id>
    </interactant>
    <interactant intactId="EBI-12205593">
        <id>Q8TAC2</id>
        <label>JOSD2</label>
    </interactant>
    <organismsDiffer>false</organismsDiffer>
    <experiments>3</experiments>
</comment>
<comment type="interaction">
    <interactant intactId="EBI-11961968">
        <id>P0DI81-3</id>
    </interactant>
    <interactant intactId="EBI-9027502">
        <id>Q719H9</id>
        <label>KCTD1</label>
    </interactant>
    <organismsDiffer>false</organismsDiffer>
    <experiments>3</experiments>
</comment>
<comment type="interaction">
    <interactant intactId="EBI-11961968">
        <id>P0DI81-3</id>
    </interactant>
    <interactant intactId="EBI-348239">
        <id>P62310</id>
        <label>LSM3</label>
    </interactant>
    <organismsDiffer>false</organismsDiffer>
    <experiments>3</experiments>
</comment>
<comment type="interaction">
    <interactant intactId="EBI-11961968">
        <id>P0DI81-3</id>
    </interactant>
    <interactant intactId="EBI-12516603">
        <id>Q8WWY6</id>
        <label>MBD3L1</label>
    </interactant>
    <organismsDiffer>false</organismsDiffer>
    <experiments>3</experiments>
</comment>
<comment type="interaction">
    <interactant intactId="EBI-11961968">
        <id>P0DI81-3</id>
    </interactant>
    <interactant intactId="EBI-13324229">
        <id>Q9BSH3</id>
        <label>NICN1</label>
    </interactant>
    <organismsDiffer>false</organismsDiffer>
    <experiments>3</experiments>
</comment>
<comment type="interaction">
    <interactant intactId="EBI-11961968">
        <id>P0DI81-3</id>
    </interactant>
    <interactant intactId="EBI-744871">
        <id>O00746</id>
        <label>NME4</label>
    </interactant>
    <organismsDiffer>false</organismsDiffer>
    <experiments>3</experiments>
</comment>
<comment type="interaction">
    <interactant intactId="EBI-11961968">
        <id>P0DI81-3</id>
    </interactant>
    <interactant intactId="EBI-13054652">
        <id>Q3KQZ1-4</id>
        <label>SLC25A35</label>
    </interactant>
    <organismsDiffer>false</organismsDiffer>
    <experiments>3</experiments>
</comment>
<comment type="interaction">
    <interactant intactId="EBI-11961968">
        <id>P0DI81-3</id>
    </interactant>
    <interactant intactId="EBI-12004298">
        <id>O75971-2</id>
        <label>SNAPC5</label>
    </interactant>
    <organismsDiffer>false</organismsDiffer>
    <experiments>3</experiments>
</comment>
<comment type="interaction">
    <interactant intactId="EBI-11961968">
        <id>P0DI81-3</id>
    </interactant>
    <interactant intactId="EBI-11139477">
        <id>Q96N21</id>
        <label>TEPSIN</label>
    </interactant>
    <organismsDiffer>false</organismsDiffer>
    <experiments>3</experiments>
</comment>
<comment type="interaction">
    <interactant intactId="EBI-11961968">
        <id>P0DI81-3</id>
    </interactant>
    <interactant intactId="EBI-743566">
        <id>O43617</id>
        <label>TRAPPC3</label>
    </interactant>
    <organismsDiffer>false</organismsDiffer>
    <experiments>8</experiments>
</comment>
<comment type="interaction">
    <interactant intactId="EBI-11961968">
        <id>P0DI81-3</id>
    </interactant>
    <interactant intactId="EBI-3246160">
        <id>Q8IUR0</id>
        <label>TRAPPC5</label>
    </interactant>
    <organismsDiffer>false</organismsDiffer>
    <experiments>5</experiments>
</comment>
<comment type="interaction">
    <interactant intactId="EBI-11961968">
        <id>P0DI81-3</id>
    </interactant>
    <interactant intactId="EBI-1054584">
        <id>Q9BRT2</id>
        <label>UQCC2</label>
    </interactant>
    <organismsDiffer>false</organismsDiffer>
    <experiments>3</experiments>
</comment>
<comment type="interaction">
    <interactant intactId="EBI-11961968">
        <id>P0DI81-3</id>
    </interactant>
    <interactant intactId="EBI-740037">
        <id>O96006</id>
        <label>ZBED1</label>
    </interactant>
    <organismsDiffer>false</organismsDiffer>
    <experiments>3</experiments>
</comment>
<comment type="interaction">
    <interactant intactId="EBI-11961968">
        <id>P0DI81-3</id>
    </interactant>
    <interactant intactId="EBI-11962468">
        <id>Q7Z4V0</id>
        <label>ZNF438</label>
    </interactant>
    <organismsDiffer>false</organismsDiffer>
    <experiments>3</experiments>
</comment>
<comment type="interaction">
    <interactant intactId="EBI-11961968">
        <id>P0DI81-3</id>
    </interactant>
    <interactant intactId="EBI-625509">
        <id>Q8N720</id>
        <label>ZNF655</label>
    </interactant>
    <organismsDiffer>false</organismsDiffer>
    <experiments>3</experiments>
</comment>
<comment type="interaction">
    <interactant intactId="EBI-11961968">
        <id>P0DI81-3</id>
    </interactant>
    <interactant intactId="EBI-527853">
        <id>Q9UGI0</id>
        <label>ZRANB1</label>
    </interactant>
    <organismsDiffer>false</organismsDiffer>
    <experiments>3</experiments>
</comment>
<comment type="subcellular location">
    <subcellularLocation>
        <location evidence="3">Cytoplasm</location>
        <location evidence="3">Perinuclear region</location>
    </subcellularLocation>
    <subcellularLocation>
        <location evidence="3">Endoplasmic reticulum-Golgi intermediate compartment</location>
    </subcellularLocation>
    <subcellularLocation>
        <location evidence="9 11">Nucleus</location>
    </subcellularLocation>
    <subcellularLocation>
        <location evidence="9">Cytoplasm</location>
    </subcellularLocation>
    <text evidence="3">Localized in perinuclear granular structures.</text>
</comment>
<comment type="alternative products">
    <event type="alternative splicing"/>
    <isoform>
        <id>P0DI81-1</id>
        <id>O14582-1</id>
        <name>1</name>
        <name>Major</name>
        <sequence type="displayed"/>
    </isoform>
    <isoform>
        <id>P0DI81-2</id>
        <id>O14582-2</id>
        <name>2</name>
        <sequence type="described" ref="VSP_041681 VSP_006040 VSP_041682"/>
    </isoform>
    <isoform>
        <id>P0DI81-3</id>
        <name>3</name>
        <sequence type="described" ref="VSP_041681"/>
    </isoform>
    <text>Additional isoforms seem to exist.</text>
</comment>
<comment type="tissue specificity">
    <text evidence="2">Expressed in brain, heart, kidney, liver, lung, pancreas, placenta, skeletal muscle, fetal cartilage, fibroblasts, placenta and lymphocytes.</text>
</comment>
<comment type="disease" evidence="2 4 5">
    <disease id="DI-02335">
        <name>Spondyloepiphyseal dysplasia tarda</name>
        <acronym>SEDT</acronym>
        <description>X-linked recessive disorder of endochondral bone formation.</description>
        <dbReference type="MIM" id="313400"/>
    </disease>
    <text>The disease is caused by variants affecting the gene represented in this entry.</text>
</comment>
<comment type="miscellaneous">
    <text>A paralogous gene encoding an identical protein appears to have arisen by retrotransposition of a cDNA from this locus and to have acquired a promoter and non-coding 5' UTR from the ZNF547 gene.</text>
</comment>
<comment type="similarity">
    <text evidence="13">Belongs to the TRAPP small subunits family. Sedlin subfamily.</text>
</comment>
<protein>
    <recommendedName>
        <fullName>Trafficking protein particle complex subunit 2</fullName>
    </recommendedName>
    <alternativeName>
        <fullName>Sedlin</fullName>
    </alternativeName>
</protein>
<dbReference type="EMBL" id="AF157065">
    <property type="protein sequence ID" value="AAD49845.1"/>
    <property type="molecule type" value="Genomic_DNA"/>
</dbReference>
<dbReference type="EMBL" id="AF157062">
    <property type="protein sequence ID" value="AAD49845.1"/>
    <property type="status" value="JOINED"/>
    <property type="molecule type" value="Genomic_DNA"/>
</dbReference>
<dbReference type="EMBL" id="AF157063">
    <property type="protein sequence ID" value="AAD49845.1"/>
    <property type="status" value="JOINED"/>
    <property type="molecule type" value="Genomic_DNA"/>
</dbReference>
<dbReference type="EMBL" id="AF157064">
    <property type="protein sequence ID" value="AAD49845.1"/>
    <property type="status" value="JOINED"/>
    <property type="molecule type" value="Genomic_DNA"/>
</dbReference>
<dbReference type="EMBL" id="AC003037">
    <property type="status" value="NOT_ANNOTATED_CDS"/>
    <property type="molecule type" value="Genomic_DNA"/>
</dbReference>
<dbReference type="EMBL" id="AK310542">
    <property type="status" value="NOT_ANNOTATED_CDS"/>
    <property type="molecule type" value="mRNA"/>
</dbReference>
<dbReference type="EMBL" id="DA542477">
    <property type="status" value="NOT_ANNOTATED_CDS"/>
    <property type="molecule type" value="mRNA"/>
</dbReference>
<dbReference type="EMBL" id="DB101396">
    <property type="status" value="NOT_ANNOTATED_CDS"/>
    <property type="molecule type" value="mRNA"/>
</dbReference>
<dbReference type="EMBL" id="BC016915">
    <property type="protein sequence ID" value="AAH16915.1"/>
    <property type="molecule type" value="mRNA"/>
</dbReference>
<dbReference type="EMBL" id="BC052618">
    <property type="protein sequence ID" value="AAH52618.1"/>
    <property type="molecule type" value="mRNA"/>
</dbReference>
<dbReference type="CCDS" id="CCDS48082.1"/>
<dbReference type="CCDS" id="CCDS48083.2">
    <molecule id="P0DI81-3"/>
</dbReference>
<dbReference type="RefSeq" id="NP_001011658.1">
    <molecule id="P0DI81-1"/>
    <property type="nucleotide sequence ID" value="NM_001011658.4"/>
</dbReference>
<dbReference type="RefSeq" id="NP_001122307.2">
    <molecule id="P0DI81-3"/>
    <property type="nucleotide sequence ID" value="NM_001128835.3"/>
</dbReference>
<dbReference type="RefSeq" id="NP_055378.1">
    <molecule id="P0DI81-1"/>
    <property type="nucleotide sequence ID" value="NM_014563.6"/>
</dbReference>
<dbReference type="RefSeq" id="XP_011543867.1">
    <property type="nucleotide sequence ID" value="XM_011545565.1"/>
</dbReference>
<dbReference type="RefSeq" id="XP_011543868.1">
    <molecule id="P0DI81-1"/>
    <property type="nucleotide sequence ID" value="XM_011545566.3"/>
</dbReference>
<dbReference type="RefSeq" id="XP_047298307.1">
    <molecule id="P0DI81-1"/>
    <property type="nucleotide sequence ID" value="XM_047442351.1"/>
</dbReference>
<dbReference type="RefSeq" id="XP_047298308.1">
    <molecule id="P0DI81-1"/>
    <property type="nucleotide sequence ID" value="XM_047442352.1"/>
</dbReference>
<dbReference type="RefSeq" id="XP_054183539.1">
    <molecule id="P0DI81-1"/>
    <property type="nucleotide sequence ID" value="XM_054327564.1"/>
</dbReference>
<dbReference type="RefSeq" id="XP_054183540.1">
    <molecule id="P0DI81-1"/>
    <property type="nucleotide sequence ID" value="XM_054327565.1"/>
</dbReference>
<dbReference type="SMR" id="P0DI81"/>
<dbReference type="BioGRID" id="112299">
    <property type="interactions" value="139"/>
</dbReference>
<dbReference type="ComplexPortal" id="CPX-4749">
    <property type="entry name" value="TRAPP II complex, TRAPPC2 variant"/>
</dbReference>
<dbReference type="ComplexPortal" id="CPX-4750">
    <property type="entry name" value="TRAPP III complex, TRAPPC2 variant"/>
</dbReference>
<dbReference type="CORUM" id="P0DI81"/>
<dbReference type="FunCoup" id="P0DI81">
    <property type="interactions" value="2281"/>
</dbReference>
<dbReference type="IntAct" id="P0DI81">
    <property type="interactions" value="61"/>
</dbReference>
<dbReference type="STRING" id="9606.ENSP00000392495"/>
<dbReference type="iPTMnet" id="P0DI81"/>
<dbReference type="PhosphoSitePlus" id="P0DI81"/>
<dbReference type="BioMuta" id="TRAPPC2"/>
<dbReference type="DMDM" id="347662477"/>
<dbReference type="jPOST" id="P0DI81"/>
<dbReference type="MassIVE" id="P0DI81"/>
<dbReference type="PaxDb" id="9606-ENSP00000392495"/>
<dbReference type="PeptideAtlas" id="P0DI81"/>
<dbReference type="Pumba" id="P0DI81"/>
<dbReference type="TopDownProteomics" id="P0DI81-1">
    <molecule id="P0DI81-1"/>
</dbReference>
<dbReference type="Antibodypedia" id="23846">
    <property type="antibodies" value="181 antibodies from 26 providers"/>
</dbReference>
<dbReference type="DNASU" id="6399"/>
<dbReference type="Ensembl" id="ENST00000359680.9">
    <molecule id="P0DI81-1"/>
    <property type="protein sequence ID" value="ENSP00000352708.5"/>
    <property type="gene ID" value="ENSG00000196459.15"/>
</dbReference>
<dbReference type="Ensembl" id="ENST00000380579.6">
    <molecule id="P0DI81-1"/>
    <property type="protein sequence ID" value="ENSP00000369953.1"/>
    <property type="gene ID" value="ENSG00000196459.15"/>
</dbReference>
<dbReference type="Ensembl" id="ENST00000458511.7">
    <molecule id="P0DI81-1"/>
    <property type="protein sequence ID" value="ENSP00000392495.3"/>
    <property type="gene ID" value="ENSG00000196459.15"/>
</dbReference>
<dbReference type="Ensembl" id="ENST00000518847.2">
    <molecule id="P0DI81-1"/>
    <property type="protein sequence ID" value="ENSP00000428900.2"/>
    <property type="gene ID" value="ENSG00000196459.15"/>
</dbReference>
<dbReference type="Ensembl" id="ENST00000683569.1">
    <molecule id="P0DI81-1"/>
    <property type="protein sequence ID" value="ENSP00000508155.1"/>
    <property type="gene ID" value="ENSG00000196459.15"/>
</dbReference>
<dbReference type="Ensembl" id="ENST00000683983.1">
    <molecule id="P0DI81-3"/>
    <property type="protein sequence ID" value="ENSP00000507474.1"/>
    <property type="gene ID" value="ENSG00000196459.15"/>
</dbReference>
<dbReference type="GeneID" id="6399"/>
<dbReference type="KEGG" id="hsa:6399"/>
<dbReference type="MANE-Select" id="ENST00000380579.6">
    <property type="protein sequence ID" value="ENSP00000369953.1"/>
    <property type="RefSeq nucleotide sequence ID" value="NM_001011658.4"/>
    <property type="RefSeq protein sequence ID" value="NP_001011658.1"/>
</dbReference>
<dbReference type="UCSC" id="uc064yav.1">
    <property type="organism name" value="human"/>
</dbReference>
<dbReference type="AGR" id="HGNC:10710"/>
<dbReference type="AGR" id="HGNC:23068"/>
<dbReference type="CTD" id="6399"/>
<dbReference type="DisGeNET" id="6399"/>
<dbReference type="GeneCards" id="TRAPPC2"/>
<dbReference type="GeneReviews" id="TRAPPC2"/>
<dbReference type="HGNC" id="HGNC:23068">
    <property type="gene designation" value="TRAPPC2"/>
</dbReference>
<dbReference type="HPA" id="ENSG00000196459">
    <property type="expression patterns" value="Low tissue specificity"/>
</dbReference>
<dbReference type="MalaCards" id="TRAPPC2"/>
<dbReference type="MIM" id="300202">
    <property type="type" value="gene"/>
</dbReference>
<dbReference type="MIM" id="313400">
    <property type="type" value="phenotype"/>
</dbReference>
<dbReference type="neXtProt" id="NX_P0DI81"/>
<dbReference type="OpenTargets" id="ENSG00000196459"/>
<dbReference type="OpenTargets" id="ENSG00000256060"/>
<dbReference type="Orphanet" id="93284">
    <property type="disease" value="Spondyloepiphyseal dysplasia tarda"/>
</dbReference>
<dbReference type="VEuPathDB" id="HostDB:ENSG00000196459"/>
<dbReference type="eggNOG" id="KOG3487">
    <property type="taxonomic scope" value="Eukaryota"/>
</dbReference>
<dbReference type="GeneTree" id="ENSGT01010000222530"/>
<dbReference type="HOGENOM" id="CLU_085828_0_2_1"/>
<dbReference type="InParanoid" id="P0DI81"/>
<dbReference type="OMA" id="FFQELHE"/>
<dbReference type="OrthoDB" id="9507739at2759"/>
<dbReference type="PAN-GO" id="P0DI81">
    <property type="GO annotations" value="4 GO annotations based on evolutionary models"/>
</dbReference>
<dbReference type="PhylomeDB" id="P0DI81"/>
<dbReference type="TreeFam" id="TF314814"/>
<dbReference type="PathwayCommons" id="P0DI81"/>
<dbReference type="Reactome" id="R-HSA-204005">
    <property type="pathway name" value="COPII-mediated vesicle transport"/>
</dbReference>
<dbReference type="Reactome" id="R-HSA-8876198">
    <property type="pathway name" value="RAB GEFs exchange GTP for GDP on RABs"/>
</dbReference>
<dbReference type="SignaLink" id="P0DI81"/>
<dbReference type="BioGRID-ORCS" id="6399">
    <property type="hits" value="314 hits in 684 CRISPR screens"/>
</dbReference>
<dbReference type="ChiTaRS" id="TRAPPC2">
    <property type="organism name" value="human"/>
</dbReference>
<dbReference type="GeneWiki" id="TRAPPC2"/>
<dbReference type="GenomeRNAi" id="6399"/>
<dbReference type="Pharos" id="P0DI81">
    <property type="development level" value="Tbio"/>
</dbReference>
<dbReference type="PRO" id="PR:P0DI81"/>
<dbReference type="Proteomes" id="UP000005640">
    <property type="component" value="Chromosome X"/>
</dbReference>
<dbReference type="RNAct" id="P0DI81">
    <property type="molecule type" value="protein"/>
</dbReference>
<dbReference type="Bgee" id="ENSG00000196459">
    <property type="expression patterns" value="Expressed in cortical plate and 204 other cell types or tissues"/>
</dbReference>
<dbReference type="ExpressionAtlas" id="P0DI81">
    <property type="expression patterns" value="baseline and differential"/>
</dbReference>
<dbReference type="GO" id="GO:0005737">
    <property type="term" value="C:cytoplasm"/>
    <property type="evidence" value="ECO:0000318"/>
    <property type="project" value="GO_Central"/>
</dbReference>
<dbReference type="GO" id="GO:0005829">
    <property type="term" value="C:cytosol"/>
    <property type="evidence" value="ECO:0000304"/>
    <property type="project" value="Reactome"/>
</dbReference>
<dbReference type="GO" id="GO:0005783">
    <property type="term" value="C:endoplasmic reticulum"/>
    <property type="evidence" value="ECO:0000314"/>
    <property type="project" value="HPA"/>
</dbReference>
<dbReference type="GO" id="GO:0005793">
    <property type="term" value="C:endoplasmic reticulum-Golgi intermediate compartment"/>
    <property type="evidence" value="ECO:0007669"/>
    <property type="project" value="UniProtKB-SubCell"/>
</dbReference>
<dbReference type="GO" id="GO:0043231">
    <property type="term" value="C:intracellular membrane-bounded organelle"/>
    <property type="evidence" value="ECO:0000314"/>
    <property type="project" value="HPA"/>
</dbReference>
<dbReference type="GO" id="GO:0005654">
    <property type="term" value="C:nucleoplasm"/>
    <property type="evidence" value="ECO:0000314"/>
    <property type="project" value="HPA"/>
</dbReference>
<dbReference type="GO" id="GO:0005634">
    <property type="term" value="C:nucleus"/>
    <property type="evidence" value="ECO:0000314"/>
    <property type="project" value="UniProtKB"/>
</dbReference>
<dbReference type="GO" id="GO:0048471">
    <property type="term" value="C:perinuclear region of cytoplasm"/>
    <property type="evidence" value="ECO:0000314"/>
    <property type="project" value="BHF-UCL"/>
</dbReference>
<dbReference type="GO" id="GO:0030008">
    <property type="term" value="C:TRAPP complex"/>
    <property type="evidence" value="ECO:0000314"/>
    <property type="project" value="UniProtKB"/>
</dbReference>
<dbReference type="GO" id="GO:1990071">
    <property type="term" value="C:TRAPPII protein complex"/>
    <property type="evidence" value="ECO:0000303"/>
    <property type="project" value="ComplexPortal"/>
</dbReference>
<dbReference type="GO" id="GO:1990072">
    <property type="term" value="C:TRAPPIII protein complex"/>
    <property type="evidence" value="ECO:0000303"/>
    <property type="project" value="ComplexPortal"/>
</dbReference>
<dbReference type="GO" id="GO:0044325">
    <property type="term" value="F:transmembrane transporter binding"/>
    <property type="evidence" value="ECO:0000353"/>
    <property type="project" value="BHF-UCL"/>
</dbReference>
<dbReference type="GO" id="GO:0048208">
    <property type="term" value="P:COPII vesicle coating"/>
    <property type="evidence" value="ECO:0000303"/>
    <property type="project" value="ComplexPortal"/>
</dbReference>
<dbReference type="GO" id="GO:0006888">
    <property type="term" value="P:endoplasmic reticulum to Golgi vesicle-mediated transport"/>
    <property type="evidence" value="ECO:0000318"/>
    <property type="project" value="GO_Central"/>
</dbReference>
<dbReference type="GO" id="GO:0001501">
    <property type="term" value="P:skeletal system development"/>
    <property type="evidence" value="ECO:0000315"/>
    <property type="project" value="UniProtKB"/>
</dbReference>
<dbReference type="GO" id="GO:0006901">
    <property type="term" value="P:vesicle coating"/>
    <property type="evidence" value="ECO:0000303"/>
    <property type="project" value="ComplexPortal"/>
</dbReference>
<dbReference type="GO" id="GO:0099022">
    <property type="term" value="P:vesicle tethering"/>
    <property type="evidence" value="ECO:0000303"/>
    <property type="project" value="ComplexPortal"/>
</dbReference>
<dbReference type="CDD" id="cd14825">
    <property type="entry name" value="TRAPPC2_sedlin"/>
    <property type="match status" value="1"/>
</dbReference>
<dbReference type="FunFam" id="3.30.450.70:FF:000001">
    <property type="entry name" value="Trafficking protein particle complex subunit 2"/>
    <property type="match status" value="1"/>
</dbReference>
<dbReference type="Gene3D" id="3.30.450.70">
    <property type="match status" value="1"/>
</dbReference>
<dbReference type="InterPro" id="IPR011012">
    <property type="entry name" value="Longin-like_dom_sf"/>
</dbReference>
<dbReference type="InterPro" id="IPR006722">
    <property type="entry name" value="Sedlin"/>
</dbReference>
<dbReference type="PANTHER" id="PTHR12403">
    <property type="entry name" value="TRAFFICKING PROTEIN PARTICLE COMPLEX SUBUNIT 2"/>
    <property type="match status" value="1"/>
</dbReference>
<dbReference type="Pfam" id="PF04628">
    <property type="entry name" value="Sedlin_N"/>
    <property type="match status" value="1"/>
</dbReference>
<dbReference type="SUPFAM" id="SSF64356">
    <property type="entry name" value="SNARE-like"/>
    <property type="match status" value="1"/>
</dbReference>
<evidence type="ECO:0000250" key="1"/>
<evidence type="ECO:0000269" key="2">
    <source>
    </source>
</evidence>
<evidence type="ECO:0000269" key="3">
    <source>
    </source>
</evidence>
<evidence type="ECO:0000269" key="4">
    <source>
    </source>
</evidence>
<evidence type="ECO:0000269" key="5">
    <source>
    </source>
</evidence>
<evidence type="ECO:0000269" key="6">
    <source>
    </source>
</evidence>
<evidence type="ECO:0000269" key="7">
    <source>
    </source>
</evidence>
<evidence type="ECO:0000269" key="8">
    <source>
    </source>
</evidence>
<evidence type="ECO:0000269" key="9">
    <source>
    </source>
</evidence>
<evidence type="ECO:0000269" key="10">
    <source>
    </source>
</evidence>
<evidence type="ECO:0000269" key="11">
    <source>
    </source>
</evidence>
<evidence type="ECO:0000303" key="12">
    <source>
    </source>
</evidence>
<evidence type="ECO:0000305" key="13"/>
<evidence type="ECO:0007744" key="14">
    <source>
    </source>
</evidence>
<sequence length="140" mass="16445">MSGSFYFVIVGHHDNPVFEMEFLPAGKAESKDDHRHLNQFIAHAALDLVDENMWLSNNMYLKTVDKFNEWFVSAFVTAGHMRFIMLHDIRQEDGIKNFFTDVYDLYIKFSMNPFYEPNSPIRSSAFDRKVQFLGKKHLLS</sequence>
<keyword id="KW-0025">Alternative splicing</keyword>
<keyword id="KW-0963">Cytoplasm</keyword>
<keyword id="KW-0225">Disease variant</keyword>
<keyword id="KW-0931">ER-Golgi transport</keyword>
<keyword id="KW-0539">Nucleus</keyword>
<keyword id="KW-0597">Phosphoprotein</keyword>
<keyword id="KW-1185">Reference proteome</keyword>
<keyword id="KW-0804">Transcription</keyword>
<keyword id="KW-0813">Transport</keyword>